<feature type="chain" id="PRO_0000187722" description="Peptidyl-tRNA hydrolase">
    <location>
        <begin position="1"/>
        <end position="187"/>
    </location>
</feature>
<feature type="active site" description="Proton acceptor" evidence="1">
    <location>
        <position position="19"/>
    </location>
</feature>
<feature type="binding site" evidence="1">
    <location>
        <position position="14"/>
    </location>
    <ligand>
        <name>tRNA</name>
        <dbReference type="ChEBI" id="CHEBI:17843"/>
    </ligand>
</feature>
<feature type="binding site" evidence="1">
    <location>
        <position position="64"/>
    </location>
    <ligand>
        <name>tRNA</name>
        <dbReference type="ChEBI" id="CHEBI:17843"/>
    </ligand>
</feature>
<feature type="binding site" evidence="1">
    <location>
        <position position="66"/>
    </location>
    <ligand>
        <name>tRNA</name>
        <dbReference type="ChEBI" id="CHEBI:17843"/>
    </ligand>
</feature>
<feature type="binding site" evidence="1">
    <location>
        <position position="112"/>
    </location>
    <ligand>
        <name>tRNA</name>
        <dbReference type="ChEBI" id="CHEBI:17843"/>
    </ligand>
</feature>
<feature type="site" description="Discriminates between blocked and unblocked aminoacyl-tRNA" evidence="1">
    <location>
        <position position="9"/>
    </location>
</feature>
<feature type="site" description="Stabilizes the basic form of H active site to accept a proton" evidence="1">
    <location>
        <position position="91"/>
    </location>
</feature>
<evidence type="ECO:0000255" key="1">
    <source>
        <dbReference type="HAMAP-Rule" id="MF_00083"/>
    </source>
</evidence>
<name>PTH_CLOAB</name>
<dbReference type="EC" id="3.1.1.29" evidence="1"/>
<dbReference type="EMBL" id="AE001437">
    <property type="protein sequence ID" value="AAK81153.1"/>
    <property type="molecule type" value="Genomic_DNA"/>
</dbReference>
<dbReference type="PIR" id="F97295">
    <property type="entry name" value="F97295"/>
</dbReference>
<dbReference type="RefSeq" id="NP_349813.1">
    <property type="nucleotide sequence ID" value="NC_003030.1"/>
</dbReference>
<dbReference type="RefSeq" id="WP_010966493.1">
    <property type="nucleotide sequence ID" value="NC_003030.1"/>
</dbReference>
<dbReference type="SMR" id="Q97E97"/>
<dbReference type="STRING" id="272562.CA_C3217"/>
<dbReference type="GeneID" id="44999713"/>
<dbReference type="KEGG" id="cac:CA_C3217"/>
<dbReference type="PATRIC" id="fig|272562.8.peg.3396"/>
<dbReference type="eggNOG" id="COG0193">
    <property type="taxonomic scope" value="Bacteria"/>
</dbReference>
<dbReference type="HOGENOM" id="CLU_062456_4_1_9"/>
<dbReference type="OrthoDB" id="9800507at2"/>
<dbReference type="Proteomes" id="UP000000814">
    <property type="component" value="Chromosome"/>
</dbReference>
<dbReference type="GO" id="GO:0005737">
    <property type="term" value="C:cytoplasm"/>
    <property type="evidence" value="ECO:0007669"/>
    <property type="project" value="UniProtKB-SubCell"/>
</dbReference>
<dbReference type="GO" id="GO:0004045">
    <property type="term" value="F:peptidyl-tRNA hydrolase activity"/>
    <property type="evidence" value="ECO:0007669"/>
    <property type="project" value="UniProtKB-UniRule"/>
</dbReference>
<dbReference type="GO" id="GO:0000049">
    <property type="term" value="F:tRNA binding"/>
    <property type="evidence" value="ECO:0007669"/>
    <property type="project" value="UniProtKB-UniRule"/>
</dbReference>
<dbReference type="GO" id="GO:0006515">
    <property type="term" value="P:protein quality control for misfolded or incompletely synthesized proteins"/>
    <property type="evidence" value="ECO:0007669"/>
    <property type="project" value="UniProtKB-UniRule"/>
</dbReference>
<dbReference type="GO" id="GO:0072344">
    <property type="term" value="P:rescue of stalled ribosome"/>
    <property type="evidence" value="ECO:0007669"/>
    <property type="project" value="UniProtKB-UniRule"/>
</dbReference>
<dbReference type="CDD" id="cd00462">
    <property type="entry name" value="PTH"/>
    <property type="match status" value="1"/>
</dbReference>
<dbReference type="FunFam" id="3.40.50.1470:FF:000001">
    <property type="entry name" value="Peptidyl-tRNA hydrolase"/>
    <property type="match status" value="1"/>
</dbReference>
<dbReference type="Gene3D" id="3.40.50.1470">
    <property type="entry name" value="Peptidyl-tRNA hydrolase"/>
    <property type="match status" value="1"/>
</dbReference>
<dbReference type="HAMAP" id="MF_00083">
    <property type="entry name" value="Pept_tRNA_hydro_bact"/>
    <property type="match status" value="1"/>
</dbReference>
<dbReference type="InterPro" id="IPR001328">
    <property type="entry name" value="Pept_tRNA_hydro"/>
</dbReference>
<dbReference type="InterPro" id="IPR018171">
    <property type="entry name" value="Pept_tRNA_hydro_CS"/>
</dbReference>
<dbReference type="InterPro" id="IPR036416">
    <property type="entry name" value="Pept_tRNA_hydro_sf"/>
</dbReference>
<dbReference type="NCBIfam" id="TIGR00447">
    <property type="entry name" value="pth"/>
    <property type="match status" value="1"/>
</dbReference>
<dbReference type="PANTHER" id="PTHR17224">
    <property type="entry name" value="PEPTIDYL-TRNA HYDROLASE"/>
    <property type="match status" value="1"/>
</dbReference>
<dbReference type="PANTHER" id="PTHR17224:SF1">
    <property type="entry name" value="PEPTIDYL-TRNA HYDROLASE"/>
    <property type="match status" value="1"/>
</dbReference>
<dbReference type="Pfam" id="PF01195">
    <property type="entry name" value="Pept_tRNA_hydro"/>
    <property type="match status" value="1"/>
</dbReference>
<dbReference type="SUPFAM" id="SSF53178">
    <property type="entry name" value="Peptidyl-tRNA hydrolase-like"/>
    <property type="match status" value="1"/>
</dbReference>
<dbReference type="PROSITE" id="PS01195">
    <property type="entry name" value="PEPT_TRNA_HYDROL_1"/>
    <property type="match status" value="1"/>
</dbReference>
<dbReference type="PROSITE" id="PS01196">
    <property type="entry name" value="PEPT_TRNA_HYDROL_2"/>
    <property type="match status" value="1"/>
</dbReference>
<protein>
    <recommendedName>
        <fullName evidence="1">Peptidyl-tRNA hydrolase</fullName>
        <shortName evidence="1">Pth</shortName>
        <ecNumber evidence="1">3.1.1.29</ecNumber>
    </recommendedName>
</protein>
<gene>
    <name evidence="1" type="primary">pth</name>
    <name type="ordered locus">CA_C3217</name>
</gene>
<accession>Q97E97</accession>
<comment type="function">
    <text evidence="1">Hydrolyzes ribosome-free peptidyl-tRNAs (with 1 or more amino acids incorporated), which drop off the ribosome during protein synthesis, or as a result of ribosome stalling.</text>
</comment>
<comment type="function">
    <text evidence="1">Catalyzes the release of premature peptidyl moieties from peptidyl-tRNA molecules trapped in stalled 50S ribosomal subunits, and thus maintains levels of free tRNAs and 50S ribosomes.</text>
</comment>
<comment type="catalytic activity">
    <reaction evidence="1">
        <text>an N-acyl-L-alpha-aminoacyl-tRNA + H2O = an N-acyl-L-amino acid + a tRNA + H(+)</text>
        <dbReference type="Rhea" id="RHEA:54448"/>
        <dbReference type="Rhea" id="RHEA-COMP:10123"/>
        <dbReference type="Rhea" id="RHEA-COMP:13883"/>
        <dbReference type="ChEBI" id="CHEBI:15377"/>
        <dbReference type="ChEBI" id="CHEBI:15378"/>
        <dbReference type="ChEBI" id="CHEBI:59874"/>
        <dbReference type="ChEBI" id="CHEBI:78442"/>
        <dbReference type="ChEBI" id="CHEBI:138191"/>
        <dbReference type="EC" id="3.1.1.29"/>
    </reaction>
</comment>
<comment type="subunit">
    <text evidence="1">Monomer.</text>
</comment>
<comment type="subcellular location">
    <subcellularLocation>
        <location evidence="1">Cytoplasm</location>
    </subcellularLocation>
</comment>
<comment type="similarity">
    <text evidence="1">Belongs to the PTH family.</text>
</comment>
<sequence length="187" mass="20725">MFLIVGLGNPGLKYEHTRHNMGFDAIENIAAKHNISIDKKGFKGLYGKGIIDGEKVILLKPYTYMNLSGESVVEAANYYKINKENIVVIYDDISLDVGKIRIRTKGSAGGHNGIKNIVLHLSSEEFPRVKVGVGEPTENLVNYVLGKFSQDERKKIEEVLNIVTEAVECMVVDGVQNAMNKFNGLKL</sequence>
<proteinExistence type="inferred from homology"/>
<organism>
    <name type="scientific">Clostridium acetobutylicum (strain ATCC 824 / DSM 792 / JCM 1419 / IAM 19013 / LMG 5710 / NBRC 13948 / NRRL B-527 / VKM B-1787 / 2291 / W)</name>
    <dbReference type="NCBI Taxonomy" id="272562"/>
    <lineage>
        <taxon>Bacteria</taxon>
        <taxon>Bacillati</taxon>
        <taxon>Bacillota</taxon>
        <taxon>Clostridia</taxon>
        <taxon>Eubacteriales</taxon>
        <taxon>Clostridiaceae</taxon>
        <taxon>Clostridium</taxon>
    </lineage>
</organism>
<reference key="1">
    <citation type="journal article" date="2001" name="J. Bacteriol.">
        <title>Genome sequence and comparative analysis of the solvent-producing bacterium Clostridium acetobutylicum.</title>
        <authorList>
            <person name="Noelling J."/>
            <person name="Breton G."/>
            <person name="Omelchenko M.V."/>
            <person name="Makarova K.S."/>
            <person name="Zeng Q."/>
            <person name="Gibson R."/>
            <person name="Lee H.M."/>
            <person name="Dubois J."/>
            <person name="Qiu D."/>
            <person name="Hitti J."/>
            <person name="Wolf Y.I."/>
            <person name="Tatusov R.L."/>
            <person name="Sabathe F."/>
            <person name="Doucette-Stamm L.A."/>
            <person name="Soucaille P."/>
            <person name="Daly M.J."/>
            <person name="Bennett G.N."/>
            <person name="Koonin E.V."/>
            <person name="Smith D.R."/>
        </authorList>
    </citation>
    <scope>NUCLEOTIDE SEQUENCE [LARGE SCALE GENOMIC DNA]</scope>
    <source>
        <strain>ATCC 824 / DSM 792 / JCM 1419 / IAM 19013 / LMG 5710 / NBRC 13948 / NRRL B-527 / VKM B-1787 / 2291 / W</strain>
    </source>
</reference>
<keyword id="KW-0963">Cytoplasm</keyword>
<keyword id="KW-0378">Hydrolase</keyword>
<keyword id="KW-1185">Reference proteome</keyword>
<keyword id="KW-0694">RNA-binding</keyword>
<keyword id="KW-0820">tRNA-binding</keyword>